<comment type="function">
    <text evidence="1">Adds a myristoyl group to the N-terminal glycine residue of certain cellular proteins.</text>
</comment>
<comment type="catalytic activity">
    <reaction>
        <text>N-terminal glycyl-[protein] + tetradecanoyl-CoA = N-tetradecanoylglycyl-[protein] + CoA + H(+)</text>
        <dbReference type="Rhea" id="RHEA:15521"/>
        <dbReference type="Rhea" id="RHEA-COMP:12666"/>
        <dbReference type="Rhea" id="RHEA-COMP:12667"/>
        <dbReference type="ChEBI" id="CHEBI:15378"/>
        <dbReference type="ChEBI" id="CHEBI:57287"/>
        <dbReference type="ChEBI" id="CHEBI:57385"/>
        <dbReference type="ChEBI" id="CHEBI:64723"/>
        <dbReference type="ChEBI" id="CHEBI:133050"/>
        <dbReference type="EC" id="2.3.1.97"/>
    </reaction>
</comment>
<comment type="subcellular location">
    <subcellularLocation>
        <location evidence="4">Cytoplasm</location>
    </subcellularLocation>
</comment>
<comment type="similarity">
    <text evidence="4">Belongs to the NMT family.</text>
</comment>
<feature type="chain" id="PRO_0000064229" description="Probable glycylpeptide N-tetradecanoyltransferase">
    <location>
        <begin position="1"/>
        <end position="450"/>
    </location>
</feature>
<feature type="region of interest" description="Disordered" evidence="3">
    <location>
        <begin position="1"/>
        <end position="28"/>
    </location>
</feature>
<feature type="binding site" evidence="2">
    <location>
        <position position="67"/>
    </location>
    <ligand>
        <name>tetradecanoyl-CoA</name>
        <dbReference type="ChEBI" id="CHEBI:57385"/>
    </ligand>
</feature>
<feature type="binding site" evidence="2">
    <location>
        <position position="68"/>
    </location>
    <ligand>
        <name>tetradecanoyl-CoA</name>
        <dbReference type="ChEBI" id="CHEBI:57385"/>
    </ligand>
</feature>
<feature type="binding site" evidence="2">
    <location>
        <position position="69"/>
    </location>
    <ligand>
        <name>tetradecanoyl-CoA</name>
        <dbReference type="ChEBI" id="CHEBI:57385"/>
    </ligand>
</feature>
<feature type="binding site" evidence="2">
    <location>
        <position position="200"/>
    </location>
    <ligand>
        <name>tetradecanoyl-CoA</name>
        <dbReference type="ChEBI" id="CHEBI:57385"/>
    </ligand>
</feature>
<feature type="binding site" evidence="2">
    <location>
        <position position="201"/>
    </location>
    <ligand>
        <name>tetradecanoyl-CoA</name>
        <dbReference type="ChEBI" id="CHEBI:57385"/>
    </ligand>
</feature>
<feature type="binding site" evidence="2">
    <location>
        <position position="202"/>
    </location>
    <ligand>
        <name>tetradecanoyl-CoA</name>
        <dbReference type="ChEBI" id="CHEBI:57385"/>
    </ligand>
</feature>
<feature type="binding site" evidence="2">
    <location>
        <position position="203"/>
    </location>
    <ligand>
        <name>tetradecanoyl-CoA</name>
        <dbReference type="ChEBI" id="CHEBI:57385"/>
    </ligand>
</feature>
<feature type="binding site" evidence="2">
    <location>
        <position position="209"/>
    </location>
    <ligand>
        <name>tetradecanoyl-CoA</name>
        <dbReference type="ChEBI" id="CHEBI:57385"/>
    </ligand>
</feature>
<feature type="binding site" evidence="2">
    <location>
        <position position="211"/>
    </location>
    <ligand>
        <name>tetradecanoyl-CoA</name>
        <dbReference type="ChEBI" id="CHEBI:57385"/>
    </ligand>
</feature>
<feature type="binding site" evidence="2">
    <location>
        <position position="212"/>
    </location>
    <ligand>
        <name>tetradecanoyl-CoA</name>
        <dbReference type="ChEBI" id="CHEBI:57385"/>
    </ligand>
</feature>
<feature type="binding site" evidence="2">
    <location>
        <position position="213"/>
    </location>
    <ligand>
        <name>tetradecanoyl-CoA</name>
        <dbReference type="ChEBI" id="CHEBI:57385"/>
    </ligand>
</feature>
<accession>P46548</accession>
<proteinExistence type="inferred from homology"/>
<evidence type="ECO:0000250" key="1"/>
<evidence type="ECO:0000250" key="2">
    <source>
        <dbReference type="UniProtKB" id="P30419"/>
    </source>
</evidence>
<evidence type="ECO:0000256" key="3">
    <source>
        <dbReference type="SAM" id="MobiDB-lite"/>
    </source>
</evidence>
<evidence type="ECO:0000305" key="4"/>
<organism>
    <name type="scientific">Caenorhabditis elegans</name>
    <dbReference type="NCBI Taxonomy" id="6239"/>
    <lineage>
        <taxon>Eukaryota</taxon>
        <taxon>Metazoa</taxon>
        <taxon>Ecdysozoa</taxon>
        <taxon>Nematoda</taxon>
        <taxon>Chromadorea</taxon>
        <taxon>Rhabditida</taxon>
        <taxon>Rhabditina</taxon>
        <taxon>Rhabditomorpha</taxon>
        <taxon>Rhabditoidea</taxon>
        <taxon>Rhabditidae</taxon>
        <taxon>Peloderinae</taxon>
        <taxon>Caenorhabditis</taxon>
    </lineage>
</organism>
<sequence length="450" mass="50889">MSHGHSHDGAPCGGHHGDDGAGGSRPSVNDVQALVDQLRLAGVDVSNMPNIPTAPRDMDEARSKSFQFWSTQPVPQMDETVPADVNCAIEENIALDKVRAEPFSLPAGFRWSNVDLSDEEQLNELYNLLTRNYVEDDDSMFRFDYSADFLKWALQVPGFRPEWHCGVRADSNNRLLAFIGAVPQTVRVYDKTVNMVEINFLCVHKNLRSRRVAPVLIREITRRVNVTGIFQAAFTAGIVIPKPVSVCRYYHRSLNPRKLIDVRFSHLSAKMTMARTIKLYKLPEETATRNLREMKSTDVPQVFKLLTTSLKQYSLAPVYNSEEELAHALVPKKGVVYSYVAENQNGKITDFVSFYSLPSTVMGHTTHKTIYAAYLYYYVAGSVTPKQLINDSLILANREKFDVFNALDLMHNEKIFSDLKFGKGDGNLQYYLYNWKCADMKPSQIGLVLQ</sequence>
<protein>
    <recommendedName>
        <fullName>Probable glycylpeptide N-tetradecanoyltransferase</fullName>
        <ecNumber>2.3.1.97</ecNumber>
    </recommendedName>
    <alternativeName>
        <fullName>Myristoyl-CoA:protein N-myristoyltransferase</fullName>
        <shortName>NMT</shortName>
    </alternativeName>
    <alternativeName>
        <fullName>Peptide N-myristoyltransferase</fullName>
    </alternativeName>
</protein>
<dbReference type="EC" id="2.3.1.97"/>
<dbReference type="EMBL" id="FO080363">
    <property type="protein sequence ID" value="CCD63182.1"/>
    <property type="molecule type" value="Genomic_DNA"/>
</dbReference>
<dbReference type="PIR" id="D88474">
    <property type="entry name" value="D88474"/>
</dbReference>
<dbReference type="RefSeq" id="NP_498326.1">
    <property type="nucleotide sequence ID" value="NM_065925.5"/>
</dbReference>
<dbReference type="SMR" id="P46548"/>
<dbReference type="BioGRID" id="41082">
    <property type="interactions" value="6"/>
</dbReference>
<dbReference type="DIP" id="DIP-24373N"/>
<dbReference type="FunCoup" id="P46548">
    <property type="interactions" value="3348"/>
</dbReference>
<dbReference type="STRING" id="6239.T17E9.2b.1"/>
<dbReference type="PaxDb" id="6239-T17E9.2b"/>
<dbReference type="PeptideAtlas" id="P46548"/>
<dbReference type="EnsemblMetazoa" id="T17E9.2a.1">
    <property type="protein sequence ID" value="T17E9.2a.1"/>
    <property type="gene ID" value="WBGene00020549"/>
</dbReference>
<dbReference type="GeneID" id="175861"/>
<dbReference type="KEGG" id="cel:CELE_T17E9.2"/>
<dbReference type="AGR" id="WB:WBGene00020549"/>
<dbReference type="CTD" id="175861"/>
<dbReference type="WormBase" id="T17E9.2a">
    <property type="protein sequence ID" value="CE01406"/>
    <property type="gene ID" value="WBGene00020549"/>
    <property type="gene designation" value="nmt-1"/>
</dbReference>
<dbReference type="eggNOG" id="KOG2779">
    <property type="taxonomic scope" value="Eukaryota"/>
</dbReference>
<dbReference type="HOGENOM" id="CLU_022882_1_0_1"/>
<dbReference type="InParanoid" id="P46548"/>
<dbReference type="OrthoDB" id="60315at2759"/>
<dbReference type="PRO" id="PR:P46548"/>
<dbReference type="Proteomes" id="UP000001940">
    <property type="component" value="Chromosome III"/>
</dbReference>
<dbReference type="Bgee" id="WBGene00020549">
    <property type="expression patterns" value="Expressed in germ line (C elegans) and 4 other cell types or tissues"/>
</dbReference>
<dbReference type="ExpressionAtlas" id="P46548">
    <property type="expression patterns" value="baseline and differential"/>
</dbReference>
<dbReference type="GO" id="GO:0005829">
    <property type="term" value="C:cytosol"/>
    <property type="evidence" value="ECO:0000318"/>
    <property type="project" value="GO_Central"/>
</dbReference>
<dbReference type="GO" id="GO:0004379">
    <property type="term" value="F:glycylpeptide N-tetradecanoyltransferase activity"/>
    <property type="evidence" value="ECO:0000318"/>
    <property type="project" value="GO_Central"/>
</dbReference>
<dbReference type="GO" id="GO:0072657">
    <property type="term" value="P:protein localization to membrane"/>
    <property type="evidence" value="ECO:0000318"/>
    <property type="project" value="GO_Central"/>
</dbReference>
<dbReference type="FunFam" id="3.40.630.170:FF:000001">
    <property type="entry name" value="Glycylpeptide N-tetradecanoyltransferase"/>
    <property type="match status" value="1"/>
</dbReference>
<dbReference type="Gene3D" id="3.40.630.170">
    <property type="match status" value="1"/>
</dbReference>
<dbReference type="InterPro" id="IPR016181">
    <property type="entry name" value="Acyl_CoA_acyltransferase"/>
</dbReference>
<dbReference type="InterPro" id="IPR000903">
    <property type="entry name" value="NMT"/>
</dbReference>
<dbReference type="InterPro" id="IPR022677">
    <property type="entry name" value="NMT_C"/>
</dbReference>
<dbReference type="InterPro" id="IPR022678">
    <property type="entry name" value="NMT_CS"/>
</dbReference>
<dbReference type="InterPro" id="IPR022676">
    <property type="entry name" value="NMT_N"/>
</dbReference>
<dbReference type="PANTHER" id="PTHR11377:SF5">
    <property type="entry name" value="GLYCYLPEPTIDE N-TETRADECANOYLTRANSFERASE"/>
    <property type="match status" value="1"/>
</dbReference>
<dbReference type="PANTHER" id="PTHR11377">
    <property type="entry name" value="N-MYRISTOYL TRANSFERASE"/>
    <property type="match status" value="1"/>
</dbReference>
<dbReference type="Pfam" id="PF01233">
    <property type="entry name" value="NMT"/>
    <property type="match status" value="1"/>
</dbReference>
<dbReference type="Pfam" id="PF02799">
    <property type="entry name" value="NMT_C"/>
    <property type="match status" value="1"/>
</dbReference>
<dbReference type="PIRSF" id="PIRSF015892">
    <property type="entry name" value="N-myristl_transf"/>
    <property type="match status" value="1"/>
</dbReference>
<dbReference type="SUPFAM" id="SSF55729">
    <property type="entry name" value="Acyl-CoA N-acyltransferases (Nat)"/>
    <property type="match status" value="2"/>
</dbReference>
<dbReference type="PROSITE" id="PS00975">
    <property type="entry name" value="NMT_1"/>
    <property type="match status" value="1"/>
</dbReference>
<dbReference type="PROSITE" id="PS00976">
    <property type="entry name" value="NMT_2"/>
    <property type="match status" value="1"/>
</dbReference>
<gene>
    <name type="primary">nmt-1</name>
    <name type="ORF">T17E9.2</name>
</gene>
<reference key="1">
    <citation type="journal article" date="1998" name="Science">
        <title>Genome sequence of the nematode C. elegans: a platform for investigating biology.</title>
        <authorList>
            <consortium name="The C. elegans sequencing consortium"/>
        </authorList>
    </citation>
    <scope>NUCLEOTIDE SEQUENCE [LARGE SCALE GENOMIC DNA]</scope>
    <source>
        <strain>Bristol N2</strain>
    </source>
</reference>
<name>NMT_CAEEL</name>
<keyword id="KW-0012">Acyltransferase</keyword>
<keyword id="KW-0963">Cytoplasm</keyword>
<keyword id="KW-1185">Reference proteome</keyword>
<keyword id="KW-0808">Transferase</keyword>